<protein>
    <recommendedName>
        <fullName evidence="1">Probable septum site-determining protein MinC</fullName>
    </recommendedName>
</protein>
<organism>
    <name type="scientific">Thermoanaerobacter sp. (strain X514)</name>
    <dbReference type="NCBI Taxonomy" id="399726"/>
    <lineage>
        <taxon>Bacteria</taxon>
        <taxon>Bacillati</taxon>
        <taxon>Bacillota</taxon>
        <taxon>Clostridia</taxon>
        <taxon>Thermoanaerobacterales</taxon>
        <taxon>Thermoanaerobacteraceae</taxon>
        <taxon>Thermoanaerobacter</taxon>
    </lineage>
</organism>
<name>MINC_THEPX</name>
<keyword id="KW-0131">Cell cycle</keyword>
<keyword id="KW-0132">Cell division</keyword>
<keyword id="KW-0717">Septation</keyword>
<sequence>MIKEAIKIQGTKEGLVIVLEEDVDIETLKEKIVNRIEKSLKFFEGATLTVRVKSLSVKEEKLQELKDVIFEKYGIEVRIKNFQEKHIKNVTDDEIFNGLEEGITKFHKGTVRSGQVVKYHGNLVIIGDVNPGGLVQAAGNIVVMGTLRGIAHAGFTGNKEAVIVASSLRAMQLRIANVISRAPDKDDASDYPEIAVVKKGKIIVKPLYHLNDLW</sequence>
<comment type="function">
    <text evidence="1">Cell division inhibitor that blocks the formation of polar Z ring septums. Rapidly oscillates between the poles of the cell to destabilize FtsZ filaments that have formed before they mature into polar Z rings. Prevents FtsZ polymerization.</text>
</comment>
<comment type="subunit">
    <text evidence="1">Interacts with MinD and FtsZ.</text>
</comment>
<comment type="similarity">
    <text evidence="1">Belongs to the MinC family.</text>
</comment>
<feature type="chain" id="PRO_1000114297" description="Probable septum site-determining protein MinC">
    <location>
        <begin position="1"/>
        <end position="214"/>
    </location>
</feature>
<accession>B0K431</accession>
<gene>
    <name evidence="1" type="primary">minC</name>
    <name type="ordered locus">Teth514_2130</name>
</gene>
<evidence type="ECO:0000255" key="1">
    <source>
        <dbReference type="HAMAP-Rule" id="MF_00267"/>
    </source>
</evidence>
<dbReference type="EMBL" id="CP000923">
    <property type="protein sequence ID" value="ABY93402.1"/>
    <property type="molecule type" value="Genomic_DNA"/>
</dbReference>
<dbReference type="RefSeq" id="WP_003866923.1">
    <property type="nucleotide sequence ID" value="NC_010320.1"/>
</dbReference>
<dbReference type="SMR" id="B0K431"/>
<dbReference type="KEGG" id="tex:Teth514_2130"/>
<dbReference type="HOGENOM" id="CLU_048711_2_0_9"/>
<dbReference type="Proteomes" id="UP000002155">
    <property type="component" value="Chromosome"/>
</dbReference>
<dbReference type="GO" id="GO:0000902">
    <property type="term" value="P:cell morphogenesis"/>
    <property type="evidence" value="ECO:0007669"/>
    <property type="project" value="InterPro"/>
</dbReference>
<dbReference type="GO" id="GO:0000917">
    <property type="term" value="P:division septum assembly"/>
    <property type="evidence" value="ECO:0007669"/>
    <property type="project" value="UniProtKB-KW"/>
</dbReference>
<dbReference type="GO" id="GO:0051302">
    <property type="term" value="P:regulation of cell division"/>
    <property type="evidence" value="ECO:0007669"/>
    <property type="project" value="InterPro"/>
</dbReference>
<dbReference type="GO" id="GO:1901891">
    <property type="term" value="P:regulation of cell septum assembly"/>
    <property type="evidence" value="ECO:0007669"/>
    <property type="project" value="InterPro"/>
</dbReference>
<dbReference type="Gene3D" id="2.160.20.70">
    <property type="match status" value="1"/>
</dbReference>
<dbReference type="Gene3D" id="3.30.160.540">
    <property type="match status" value="1"/>
</dbReference>
<dbReference type="HAMAP" id="MF_00267">
    <property type="entry name" value="MinC"/>
    <property type="match status" value="1"/>
</dbReference>
<dbReference type="InterPro" id="IPR016098">
    <property type="entry name" value="CAP/MinC_C"/>
</dbReference>
<dbReference type="InterPro" id="IPR013033">
    <property type="entry name" value="MinC"/>
</dbReference>
<dbReference type="InterPro" id="IPR036145">
    <property type="entry name" value="MinC_C_sf"/>
</dbReference>
<dbReference type="InterPro" id="IPR007874">
    <property type="entry name" value="MinC_N"/>
</dbReference>
<dbReference type="InterPro" id="IPR005526">
    <property type="entry name" value="Septum_form_inhib_MinC_C"/>
</dbReference>
<dbReference type="NCBIfam" id="TIGR01222">
    <property type="entry name" value="minC"/>
    <property type="match status" value="1"/>
</dbReference>
<dbReference type="PANTHER" id="PTHR34108">
    <property type="entry name" value="SEPTUM SITE-DETERMINING PROTEIN MINC"/>
    <property type="match status" value="1"/>
</dbReference>
<dbReference type="PANTHER" id="PTHR34108:SF1">
    <property type="entry name" value="SEPTUM SITE-DETERMINING PROTEIN MINC"/>
    <property type="match status" value="1"/>
</dbReference>
<dbReference type="Pfam" id="PF03775">
    <property type="entry name" value="MinC_C"/>
    <property type="match status" value="1"/>
</dbReference>
<dbReference type="Pfam" id="PF05209">
    <property type="entry name" value="MinC_N"/>
    <property type="match status" value="1"/>
</dbReference>
<dbReference type="SUPFAM" id="SSF63848">
    <property type="entry name" value="Cell-division inhibitor MinC, C-terminal domain"/>
    <property type="match status" value="1"/>
</dbReference>
<proteinExistence type="inferred from homology"/>
<reference key="1">
    <citation type="submission" date="2008-01" db="EMBL/GenBank/DDBJ databases">
        <title>Complete sequence of Thermoanaerobacter sp. X514.</title>
        <authorList>
            <consortium name="US DOE Joint Genome Institute"/>
            <person name="Copeland A."/>
            <person name="Lucas S."/>
            <person name="Lapidus A."/>
            <person name="Barry K."/>
            <person name="Glavina del Rio T."/>
            <person name="Dalin E."/>
            <person name="Tice H."/>
            <person name="Pitluck S."/>
            <person name="Bruce D."/>
            <person name="Goodwin L."/>
            <person name="Saunders E."/>
            <person name="Brettin T."/>
            <person name="Detter J.C."/>
            <person name="Han C."/>
            <person name="Schmutz J."/>
            <person name="Larimer F."/>
            <person name="Land M."/>
            <person name="Hauser L."/>
            <person name="Kyrpides N."/>
            <person name="Kim E."/>
            <person name="Hemme C."/>
            <person name="Fields M.W."/>
            <person name="He Z."/>
            <person name="Zhou J."/>
            <person name="Richardson P."/>
        </authorList>
    </citation>
    <scope>NUCLEOTIDE SEQUENCE [LARGE SCALE GENOMIC DNA]</scope>
    <source>
        <strain>X514</strain>
    </source>
</reference>